<organism>
    <name type="scientific">Bos taurus</name>
    <name type="common">Bovine</name>
    <dbReference type="NCBI Taxonomy" id="9913"/>
    <lineage>
        <taxon>Eukaryota</taxon>
        <taxon>Metazoa</taxon>
        <taxon>Chordata</taxon>
        <taxon>Craniata</taxon>
        <taxon>Vertebrata</taxon>
        <taxon>Euteleostomi</taxon>
        <taxon>Mammalia</taxon>
        <taxon>Eutheria</taxon>
        <taxon>Laurasiatheria</taxon>
        <taxon>Artiodactyla</taxon>
        <taxon>Ruminantia</taxon>
        <taxon>Pecora</taxon>
        <taxon>Bovidae</taxon>
        <taxon>Bovinae</taxon>
        <taxon>Bos</taxon>
    </lineage>
</organism>
<proteinExistence type="evidence at transcript level"/>
<dbReference type="EMBL" id="DAAA02007944">
    <property type="status" value="NOT_ANNOTATED_CDS"/>
    <property type="molecule type" value="Genomic_DNA"/>
</dbReference>
<dbReference type="EMBL" id="BC120193">
    <property type="protein sequence ID" value="AAI20194.1"/>
    <property type="status" value="ALT_SEQ"/>
    <property type="molecule type" value="mRNA"/>
</dbReference>
<dbReference type="RefSeq" id="NP_001192957.1">
    <property type="nucleotide sequence ID" value="NM_001206028.1"/>
</dbReference>
<dbReference type="FunCoup" id="F1MJM0">
    <property type="interactions" value="1090"/>
</dbReference>
<dbReference type="STRING" id="9913.ENSBTAP00000058062"/>
<dbReference type="PaxDb" id="9913-ENSBTAP00000025469"/>
<dbReference type="GeneID" id="533643"/>
<dbReference type="KEGG" id="bta:533643"/>
<dbReference type="CTD" id="284695"/>
<dbReference type="VEuPathDB" id="HostDB:ENSBTAG00000019133"/>
<dbReference type="eggNOG" id="ENOG502QUAZ">
    <property type="taxonomic scope" value="Eukaryota"/>
</dbReference>
<dbReference type="HOGENOM" id="CLU_024193_2_0_1"/>
<dbReference type="InParanoid" id="F1MJM0"/>
<dbReference type="OMA" id="DDYTHSC"/>
<dbReference type="OrthoDB" id="9904304at2759"/>
<dbReference type="TreeFam" id="TF105407"/>
<dbReference type="Proteomes" id="UP000009136">
    <property type="component" value="Chromosome 3"/>
</dbReference>
<dbReference type="Bgee" id="ENSBTAG00000019133">
    <property type="expression patterns" value="Expressed in pons and 104 other cell types or tissues"/>
</dbReference>
<dbReference type="GO" id="GO:0044609">
    <property type="term" value="C:DBIRD complex"/>
    <property type="evidence" value="ECO:0000250"/>
    <property type="project" value="UniProtKB"/>
</dbReference>
<dbReference type="GO" id="GO:0016363">
    <property type="term" value="C:nuclear matrix"/>
    <property type="evidence" value="ECO:0007669"/>
    <property type="project" value="UniProtKB-SubCell"/>
</dbReference>
<dbReference type="GO" id="GO:0005634">
    <property type="term" value="C:nucleus"/>
    <property type="evidence" value="ECO:0000318"/>
    <property type="project" value="GO_Central"/>
</dbReference>
<dbReference type="GO" id="GO:0003677">
    <property type="term" value="F:DNA binding"/>
    <property type="evidence" value="ECO:0007669"/>
    <property type="project" value="UniProtKB-KW"/>
</dbReference>
<dbReference type="GO" id="GO:0000993">
    <property type="term" value="F:RNA polymerase II complex binding"/>
    <property type="evidence" value="ECO:0000250"/>
    <property type="project" value="UniProtKB"/>
</dbReference>
<dbReference type="GO" id="GO:0008270">
    <property type="term" value="F:zinc ion binding"/>
    <property type="evidence" value="ECO:0007669"/>
    <property type="project" value="UniProtKB-KW"/>
</dbReference>
<dbReference type="GO" id="GO:0006397">
    <property type="term" value="P:mRNA processing"/>
    <property type="evidence" value="ECO:0007669"/>
    <property type="project" value="UniProtKB-KW"/>
</dbReference>
<dbReference type="GO" id="GO:0032784">
    <property type="term" value="P:regulation of DNA-templated transcription elongation"/>
    <property type="evidence" value="ECO:0000250"/>
    <property type="project" value="UniProtKB"/>
</dbReference>
<dbReference type="GO" id="GO:0043484">
    <property type="term" value="P:regulation of RNA splicing"/>
    <property type="evidence" value="ECO:0000250"/>
    <property type="project" value="UniProtKB"/>
</dbReference>
<dbReference type="GO" id="GO:0008380">
    <property type="term" value="P:RNA splicing"/>
    <property type="evidence" value="ECO:0007669"/>
    <property type="project" value="UniProtKB-KW"/>
</dbReference>
<dbReference type="InterPro" id="IPR007071">
    <property type="entry name" value="AKAP95"/>
</dbReference>
<dbReference type="InterPro" id="IPR034736">
    <property type="entry name" value="ZF_C2H2_AKAP95"/>
</dbReference>
<dbReference type="PANTHER" id="PTHR12190">
    <property type="entry name" value="A-KINASE ANCHOR PROTEIN AKAP 8"/>
    <property type="match status" value="1"/>
</dbReference>
<dbReference type="PANTHER" id="PTHR12190:SF1">
    <property type="entry name" value="DBIRD COMPLEX SUBUNIT ZNF326"/>
    <property type="match status" value="1"/>
</dbReference>
<dbReference type="Pfam" id="PF04988">
    <property type="entry name" value="AKAP95"/>
    <property type="match status" value="1"/>
</dbReference>
<dbReference type="PROSITE" id="PS51799">
    <property type="entry name" value="ZF_C2H2_AKAP95"/>
    <property type="match status" value="2"/>
</dbReference>
<name>ZN326_BOVIN</name>
<reference key="1">
    <citation type="journal article" date="2009" name="Genome Biol.">
        <title>A whole-genome assembly of the domestic cow, Bos taurus.</title>
        <authorList>
            <person name="Zimin A.V."/>
            <person name="Delcher A.L."/>
            <person name="Florea L."/>
            <person name="Kelley D.R."/>
            <person name="Schatz M.C."/>
            <person name="Puiu D."/>
            <person name="Hanrahan F."/>
            <person name="Pertea G."/>
            <person name="Van Tassell C.P."/>
            <person name="Sonstegard T.S."/>
            <person name="Marcais G."/>
            <person name="Roberts M."/>
            <person name="Subramanian P."/>
            <person name="Yorke J.A."/>
            <person name="Salzberg S.L."/>
        </authorList>
    </citation>
    <scope>NUCLEOTIDE SEQUENCE [LARGE SCALE GENOMIC DNA]</scope>
    <source>
        <strain>Hereford</strain>
    </source>
</reference>
<reference key="2">
    <citation type="submission" date="2006-08" db="EMBL/GenBank/DDBJ databases">
        <authorList>
            <consortium name="NIH - Mammalian Gene Collection (MGC) project"/>
        </authorList>
    </citation>
    <scope>NUCLEOTIDE SEQUENCE [LARGE SCALE MRNA] OF 1-277</scope>
    <source>
        <strain>Hereford</strain>
        <tissue>Fetal lung</tissue>
    </source>
</reference>
<feature type="chain" id="PRO_0000417534" description="DBIRD complex subunit ZNF326">
    <location>
        <begin position="1"/>
        <end position="579"/>
    </location>
</feature>
<feature type="zinc finger region" description="C2H2 AKAP95-type 1" evidence="3">
    <location>
        <begin position="314"/>
        <end position="336"/>
    </location>
</feature>
<feature type="zinc finger region" description="C2H2 AKAP95-type 2" evidence="3">
    <location>
        <begin position="407"/>
        <end position="430"/>
    </location>
</feature>
<feature type="region of interest" description="Mediates transcriptional activation" evidence="1">
    <location>
        <begin position="1"/>
        <end position="124"/>
    </location>
</feature>
<feature type="region of interest" description="Disordered" evidence="4">
    <location>
        <begin position="154"/>
        <end position="194"/>
    </location>
</feature>
<feature type="region of interest" description="Disordered" evidence="4">
    <location>
        <begin position="248"/>
        <end position="302"/>
    </location>
</feature>
<feature type="region of interest" description="Disordered" evidence="4">
    <location>
        <begin position="470"/>
        <end position="579"/>
    </location>
</feature>
<feature type="short sequence motif" description="Bipartite nuclear localization signal" evidence="1">
    <location>
        <begin position="238"/>
        <end position="260"/>
    </location>
</feature>
<feature type="compositionally biased region" description="Basic and acidic residues" evidence="4">
    <location>
        <begin position="272"/>
        <end position="290"/>
    </location>
</feature>
<feature type="compositionally biased region" description="Acidic residues" evidence="4">
    <location>
        <begin position="483"/>
        <end position="520"/>
    </location>
</feature>
<feature type="compositionally biased region" description="Acidic residues" evidence="4">
    <location>
        <begin position="529"/>
        <end position="541"/>
    </location>
</feature>
<feature type="compositionally biased region" description="Acidic residues" evidence="4">
    <location>
        <begin position="549"/>
        <end position="565"/>
    </location>
</feature>
<feature type="modified residue" description="Phosphoserine" evidence="2">
    <location>
        <position position="48"/>
    </location>
</feature>
<feature type="modified residue" description="Phosphoserine" evidence="2">
    <location>
        <position position="56"/>
    </location>
</feature>
<feature type="modified residue" description="Phosphoserine" evidence="2">
    <location>
        <position position="63"/>
    </location>
</feature>
<feature type="modified residue" description="Phosphoserine" evidence="2">
    <location>
        <position position="69"/>
    </location>
</feature>
<feature type="modified residue" description="Phosphoserine" evidence="2">
    <location>
        <position position="81"/>
    </location>
</feature>
<feature type="modified residue" description="Phosphoserine" evidence="2">
    <location>
        <position position="82"/>
    </location>
</feature>
<feature type="modified residue" description="Phosphoserine" evidence="2">
    <location>
        <position position="91"/>
    </location>
</feature>
<feature type="modified residue" description="Phosphoserine" evidence="2">
    <location>
        <position position="106"/>
    </location>
</feature>
<feature type="modified residue" description="Phosphoserine" evidence="2">
    <location>
        <position position="114"/>
    </location>
</feature>
<feature type="modified residue" description="Phosphoserine" evidence="2">
    <location>
        <position position="118"/>
    </location>
</feature>
<feature type="modified residue" description="Phosphoserine" evidence="2">
    <location>
        <position position="121"/>
    </location>
</feature>
<feature type="modified residue" description="Phosphoserine" evidence="2">
    <location>
        <position position="137"/>
    </location>
</feature>
<feature type="modified residue" description="Omega-N-methylarginine" evidence="2">
    <location>
        <position position="173"/>
    </location>
</feature>
<feature type="modified residue" description="Phosphoserine" evidence="2">
    <location>
        <position position="212"/>
    </location>
</feature>
<feature type="modified residue" description="Omega-N-methylarginine" evidence="2">
    <location>
        <position position="235"/>
    </location>
</feature>
<feature type="modified residue" description="N6-acetyllysine; alternate" evidence="2">
    <location>
        <position position="247"/>
    </location>
</feature>
<feature type="modified residue" description="Phosphothreonine" evidence="2">
    <location>
        <position position="251"/>
    </location>
</feature>
<feature type="modified residue" description="Phosphoserine" evidence="2">
    <location>
        <position position="270"/>
    </location>
</feature>
<feature type="cross-link" description="Glycyl lysine isopeptide (Lys-Gly) (interchain with G-Cter in SUMO2)" evidence="2">
    <location>
        <position position="140"/>
    </location>
</feature>
<feature type="cross-link" description="Glycyl lysine isopeptide (Lys-Gly) (interchain with G-Cter in SUMO2)" evidence="2">
    <location>
        <position position="240"/>
    </location>
</feature>
<feature type="cross-link" description="Glycyl lysine isopeptide (Lys-Gly) (interchain with G-Cter in SUMO2); alternate" evidence="2">
    <location>
        <position position="247"/>
    </location>
</feature>
<feature type="cross-link" description="Glycyl lysine isopeptide (Lys-Gly) (interchain with G-Cter in SUMO2)" evidence="2">
    <location>
        <position position="254"/>
    </location>
</feature>
<feature type="cross-link" description="Glycyl lysine isopeptide (Lys-Gly) (interchain with G-Cter in SUMO2)" evidence="2">
    <location>
        <position position="264"/>
    </location>
</feature>
<feature type="cross-link" description="Glycyl lysine isopeptide (Lys-Gly) (interchain with G-Cter in SUMO2)" evidence="2">
    <location>
        <position position="401"/>
    </location>
</feature>
<feature type="cross-link" description="Glycyl lysine isopeptide (Lys-Gly) (interchain with G-Cter in SUMO2)" evidence="2">
    <location>
        <position position="459"/>
    </location>
</feature>
<feature type="cross-link" description="Glycyl lysine isopeptide (Lys-Gly) (interchain with G-Cter in SUMO2)" evidence="2">
    <location>
        <position position="467"/>
    </location>
</feature>
<comment type="function">
    <text evidence="1">Core component of the DBIRD complex, a multiprotein complex that acts at the interface between core mRNP particles and RNA polymerase II (RNAPII) and integrates transcript elongation with the regulation of alternative splicing: the DBIRD complex affects local transcript elongation rates and alternative splicing of a large set of exons embedded in (A + T)-rich DNA regions. May play a role in neuronal differentiation and is able to bind DNA and activate expression in vitro (By similarity).</text>
</comment>
<comment type="subunit">
    <text evidence="1">Component of the DBIRD complex. Interacts with CCAR2; the interaction is direct (By similarity).</text>
</comment>
<comment type="subcellular location">
    <subcellularLocation>
        <location evidence="1">Nucleus matrix</location>
    </subcellularLocation>
</comment>
<comment type="similarity">
    <text evidence="3">Belongs to the AKAP95 family.</text>
</comment>
<comment type="sequence caution" evidence="5">
    <conflict type="miscellaneous discrepancy">
        <sequence resource="EMBL-CDS" id="AAI20194"/>
    </conflict>
    <text>Contaminating sequence. Potential poly-A sequence.</text>
</comment>
<protein>
    <recommendedName>
        <fullName>DBIRD complex subunit ZNF326</fullName>
    </recommendedName>
    <alternativeName>
        <fullName>Zinc finger protein 326</fullName>
    </alternativeName>
    <alternativeName>
        <fullName>Zinc finger protein interacting with mRNPs</fullName>
    </alternativeName>
</protein>
<accession>F1MJM0</accession>
<accession>Q0VCF6</accession>
<keyword id="KW-0007">Acetylation</keyword>
<keyword id="KW-0010">Activator</keyword>
<keyword id="KW-0238">DNA-binding</keyword>
<keyword id="KW-1017">Isopeptide bond</keyword>
<keyword id="KW-0479">Metal-binding</keyword>
<keyword id="KW-0488">Methylation</keyword>
<keyword id="KW-0507">mRNA processing</keyword>
<keyword id="KW-0508">mRNA splicing</keyword>
<keyword id="KW-0539">Nucleus</keyword>
<keyword id="KW-0597">Phosphoprotein</keyword>
<keyword id="KW-1185">Reference proteome</keyword>
<keyword id="KW-0677">Repeat</keyword>
<keyword id="KW-0804">Transcription</keyword>
<keyword id="KW-0805">Transcription regulation</keyword>
<keyword id="KW-0832">Ubl conjugation</keyword>
<keyword id="KW-0862">Zinc</keyword>
<keyword id="KW-0863">Zinc-finger</keyword>
<evidence type="ECO:0000250" key="1"/>
<evidence type="ECO:0000250" key="2">
    <source>
        <dbReference type="UniProtKB" id="Q5BKZ1"/>
    </source>
</evidence>
<evidence type="ECO:0000255" key="3">
    <source>
        <dbReference type="PROSITE-ProRule" id="PRU01140"/>
    </source>
</evidence>
<evidence type="ECO:0000256" key="4">
    <source>
        <dbReference type="SAM" id="MobiDB-lite"/>
    </source>
</evidence>
<evidence type="ECO:0000305" key="5"/>
<sequence length="579" mass="64845">MDFEDDYTHSACRNTYQSFNGMDRDYGPGSYGGMDRDYGHGSYGGQRSMDSYLNQSYGMDNHSGGGGGSRFGPYESYDSRSSLGGRDLYRSGYGFNEPEQSRFGGSYGGRFESSYRNSLDSFGGRNQGGSSWEAPYSRSKLRPGFMEDRGRENYSSYSSFSSPHMKPAPVGSRGRGTPAYPESTFGSRNYDAFGGPSTGRGRGRGHMSDFGSIHRPGIVVDYQNKPTNVTVAAARGIKRKMIQPFNKPGGTFIKKPKLAKPVEKMSLSKSPTKTDPKNEEEEKRRIEARREKQRRRREKNSEKYGDGYRMAFTCSFCKFRTFEEKDIELHLESASHQETLDHIQKQTKFDKVVMEFLHECMVNKFKKTSIRKQQTNNQTEAVKIIEKDVMEGVTADDHMMKVETVHCSACSVYIPALHSSVQQHLKSPDHIKGKQAYKEQIKRESVLTATSILNNPIVKARYERFIKGENPFEIQDHSQDQQIEGDEEEEEKIDEPVEEEEEEEEEEEEVGEVEEAEEVGEGGGVEGVGDTEEGGDVEGEGEVGAVGEGEGEGEGVGEVEEEEAKEEPVGFSVDQAEEN</sequence>
<gene>
    <name type="primary">ZNF326</name>
    <name type="synonym">ZIRD</name>
</gene>